<evidence type="ECO:0000250" key="1">
    <source>
        <dbReference type="UniProtKB" id="P0A910"/>
    </source>
</evidence>
<evidence type="ECO:0000255" key="2"/>
<evidence type="ECO:0000255" key="3">
    <source>
        <dbReference type="PROSITE-ProRule" id="PRU00473"/>
    </source>
</evidence>
<evidence type="ECO:0000269" key="4">
    <source>
    </source>
</evidence>
<evidence type="ECO:0000269" key="5">
    <source>
    </source>
</evidence>
<evidence type="ECO:0000269" key="6">
    <source>
    </source>
</evidence>
<evidence type="ECO:0000269" key="7">
    <source>
    </source>
</evidence>
<evidence type="ECO:0000303" key="8">
    <source>
    </source>
</evidence>
<evidence type="ECO:0000305" key="9"/>
<evidence type="ECO:0000305" key="10">
    <source>
    </source>
</evidence>
<evidence type="ECO:0007744" key="11">
    <source>
        <dbReference type="PDB" id="1R1M"/>
    </source>
</evidence>
<evidence type="ECO:0007829" key="12">
    <source>
        <dbReference type="PDB" id="1R1M"/>
    </source>
</evidence>
<proteinExistence type="evidence at protein level"/>
<dbReference type="EMBL" id="AE002098">
    <property type="protein sequence ID" value="AAF40822.1"/>
    <property type="molecule type" value="Genomic_DNA"/>
</dbReference>
<dbReference type="PIR" id="A37004">
    <property type="entry name" value="A37004"/>
</dbReference>
<dbReference type="PIR" id="C81205">
    <property type="entry name" value="C81205"/>
</dbReference>
<dbReference type="RefSeq" id="NP_273431.1">
    <property type="nucleotide sequence ID" value="NC_003112.2"/>
</dbReference>
<dbReference type="RefSeq" id="WP_002212455.1">
    <property type="nucleotide sequence ID" value="NC_003112.2"/>
</dbReference>
<dbReference type="PDB" id="1R1M">
    <property type="method" value="X-ray"/>
    <property type="resolution" value="1.90 A"/>
    <property type="chains" value="A=87-242"/>
</dbReference>
<dbReference type="PDBsum" id="1R1M"/>
<dbReference type="SMR" id="P0A0V3"/>
<dbReference type="STRING" id="122586.NMB0382"/>
<dbReference type="PaxDb" id="122586-NMB0382"/>
<dbReference type="KEGG" id="nme:NMB0382"/>
<dbReference type="PATRIC" id="fig|122586.8.peg.483"/>
<dbReference type="HOGENOM" id="CLU_016890_5_0_4"/>
<dbReference type="InParanoid" id="P0A0V3"/>
<dbReference type="OrthoDB" id="1149075at2"/>
<dbReference type="EvolutionaryTrace" id="P0A0V3"/>
<dbReference type="Proteomes" id="UP000000425">
    <property type="component" value="Chromosome"/>
</dbReference>
<dbReference type="GO" id="GO:0009279">
    <property type="term" value="C:cell outer membrane"/>
    <property type="evidence" value="ECO:0007669"/>
    <property type="project" value="UniProtKB-SubCell"/>
</dbReference>
<dbReference type="GO" id="GO:0046930">
    <property type="term" value="C:pore complex"/>
    <property type="evidence" value="ECO:0007669"/>
    <property type="project" value="UniProtKB-KW"/>
</dbReference>
<dbReference type="GO" id="GO:0015288">
    <property type="term" value="F:porin activity"/>
    <property type="evidence" value="ECO:0007669"/>
    <property type="project" value="UniProtKB-KW"/>
</dbReference>
<dbReference type="GO" id="GO:0006811">
    <property type="term" value="P:monoatomic ion transport"/>
    <property type="evidence" value="ECO:0007669"/>
    <property type="project" value="UniProtKB-KW"/>
</dbReference>
<dbReference type="CDD" id="cd07185">
    <property type="entry name" value="OmpA_C-like"/>
    <property type="match status" value="1"/>
</dbReference>
<dbReference type="FunFam" id="3.30.1330.60:FF:000010">
    <property type="entry name" value="Outer membrane protein class 4"/>
    <property type="match status" value="1"/>
</dbReference>
<dbReference type="Gene3D" id="3.30.1330.60">
    <property type="entry name" value="OmpA-like domain"/>
    <property type="match status" value="1"/>
</dbReference>
<dbReference type="InterPro" id="IPR050330">
    <property type="entry name" value="Bact_OuterMem_StrucFunc"/>
</dbReference>
<dbReference type="InterPro" id="IPR006664">
    <property type="entry name" value="OMP_bac"/>
</dbReference>
<dbReference type="InterPro" id="IPR006665">
    <property type="entry name" value="OmpA-like"/>
</dbReference>
<dbReference type="InterPro" id="IPR006690">
    <property type="entry name" value="OMPA-like_CS"/>
</dbReference>
<dbReference type="InterPro" id="IPR036737">
    <property type="entry name" value="OmpA-like_sf"/>
</dbReference>
<dbReference type="PANTHER" id="PTHR30329:SF21">
    <property type="entry name" value="LIPOPROTEIN YIAD-RELATED"/>
    <property type="match status" value="1"/>
</dbReference>
<dbReference type="PANTHER" id="PTHR30329">
    <property type="entry name" value="STATOR ELEMENT OF FLAGELLAR MOTOR COMPLEX"/>
    <property type="match status" value="1"/>
</dbReference>
<dbReference type="Pfam" id="PF00691">
    <property type="entry name" value="OmpA"/>
    <property type="match status" value="1"/>
</dbReference>
<dbReference type="PRINTS" id="PR01021">
    <property type="entry name" value="OMPADOMAIN"/>
</dbReference>
<dbReference type="SUPFAM" id="SSF103088">
    <property type="entry name" value="OmpA-like"/>
    <property type="match status" value="1"/>
</dbReference>
<dbReference type="PROSITE" id="PS01068">
    <property type="entry name" value="OMPA_1"/>
    <property type="match status" value="1"/>
</dbReference>
<dbReference type="PROSITE" id="PS51123">
    <property type="entry name" value="OMPA_2"/>
    <property type="match status" value="1"/>
</dbReference>
<name>OMP4_NEIMB</name>
<keyword id="KW-0002">3D-structure</keyword>
<keyword id="KW-0998">Cell outer membrane</keyword>
<keyword id="KW-1015">Disulfide bond</keyword>
<keyword id="KW-0406">Ion transport</keyword>
<keyword id="KW-0472">Membrane</keyword>
<keyword id="KW-0626">Porin</keyword>
<keyword id="KW-1185">Reference proteome</keyword>
<keyword id="KW-0677">Repeat</keyword>
<keyword id="KW-0732">Signal</keyword>
<keyword id="KW-0812">Transmembrane</keyword>
<keyword id="KW-1134">Transmembrane beta strand</keyword>
<keyword id="KW-0813">Transport</keyword>
<accession>P0A0V3</accession>
<accession>P38367</accession>
<comment type="subunit">
    <text evidence="4">The C-terminus exists in a monomer-dimer equilibrium.</text>
</comment>
<comment type="subcellular location">
    <subcellularLocation>
        <location evidence="1">Cell outer membrane</location>
        <topology>Multi-pass membrane protein</topology>
    </subcellularLocation>
</comment>
<comment type="domain">
    <text evidence="10">The periplasmic C-terminus (residues 87-242) probably binds peptidoglycan.</text>
</comment>
<comment type="disruption phenotype">
    <text evidence="7">No visible phenotype when deleted in strains CCUG 37602 / M1080 / Serogroup B / Serotype 1 and 8765 / Serotype 15.</text>
</comment>
<comment type="biotechnology">
    <text evidence="5 6">Present in outer membrane vesicle blebs which are used as vaccines in human.</text>
</comment>
<comment type="similarity">
    <text evidence="9">Belongs to the outer membrane OOP (TC 1.B.6) superfamily.</text>
</comment>
<gene>
    <name evidence="8" type="primary">rmpM</name>
    <name type="ordered locus">NMB0382</name>
</gene>
<feature type="signal peptide" evidence="2">
    <location>
        <begin position="1"/>
        <end position="22"/>
    </location>
</feature>
<feature type="chain" id="PRO_0000020112" description="Outer membrane protein class 4">
    <location>
        <begin position="23"/>
        <end position="242"/>
    </location>
</feature>
<feature type="repeat" description="1">
    <location>
        <begin position="69"/>
        <end position="70"/>
    </location>
</feature>
<feature type="repeat" description="2">
    <location>
        <begin position="71"/>
        <end position="72"/>
    </location>
</feature>
<feature type="repeat" description="3">
    <location>
        <begin position="73"/>
        <end position="74"/>
    </location>
</feature>
<feature type="repeat" description="4">
    <location>
        <begin position="75"/>
        <end position="76"/>
    </location>
</feature>
<feature type="repeat" description="5">
    <location>
        <begin position="77"/>
        <end position="78"/>
    </location>
</feature>
<feature type="repeat" description="6">
    <location>
        <begin position="79"/>
        <end position="80"/>
    </location>
</feature>
<feature type="repeat" description="7">
    <location>
        <begin position="81"/>
        <end position="82"/>
    </location>
</feature>
<feature type="domain" description="OmpA-like" evidence="3">
    <location>
        <begin position="92"/>
        <end position="229"/>
    </location>
</feature>
<feature type="region of interest" description="7 X 2 AA tandem repeats of X-P">
    <location>
        <begin position="69"/>
        <end position="82"/>
    </location>
</feature>
<feature type="disulfide bond" evidence="4">
    <location>
        <begin position="191"/>
        <end position="214"/>
    </location>
</feature>
<feature type="sequence variant" description="In strain: CCUG 18241.">
    <location>
        <begin position="78"/>
        <end position="79"/>
    </location>
</feature>
<feature type="sequence variant" description="In strain: CCUG 18241.">
    <original>SR</original>
    <variation>GQ</variation>
    <location>
        <begin position="128"/>
        <end position="129"/>
    </location>
</feature>
<feature type="sequence variant" description="In strain: CCUG 18241.">
    <original>V</original>
    <variation>I</variation>
    <location>
        <position position="132"/>
    </location>
</feature>
<feature type="strand" evidence="12">
    <location>
        <begin position="92"/>
        <end position="100"/>
    </location>
</feature>
<feature type="helix" evidence="12">
    <location>
        <begin position="101"/>
        <end position="105"/>
    </location>
</feature>
<feature type="strand" evidence="12">
    <location>
        <begin position="108"/>
        <end position="110"/>
    </location>
</feature>
<feature type="helix" evidence="12">
    <location>
        <begin position="114"/>
        <end position="127"/>
    </location>
</feature>
<feature type="strand" evidence="12">
    <location>
        <begin position="132"/>
        <end position="140"/>
    </location>
</feature>
<feature type="strand" evidence="12">
    <location>
        <begin position="143"/>
        <end position="145"/>
    </location>
</feature>
<feature type="helix" evidence="12">
    <location>
        <begin position="147"/>
        <end position="167"/>
    </location>
</feature>
<feature type="helix" evidence="12">
    <location>
        <begin position="172"/>
        <end position="174"/>
    </location>
</feature>
<feature type="strand" evidence="12">
    <location>
        <begin position="175"/>
        <end position="179"/>
    </location>
</feature>
<feature type="turn" evidence="12">
    <location>
        <begin position="181"/>
        <end position="184"/>
    </location>
</feature>
<feature type="helix" evidence="12">
    <location>
        <begin position="188"/>
        <end position="196"/>
    </location>
</feature>
<feature type="helix" evidence="12">
    <location>
        <begin position="206"/>
        <end position="214"/>
    </location>
</feature>
<feature type="helix" evidence="12">
    <location>
        <begin position="216"/>
        <end position="218"/>
    </location>
</feature>
<feature type="strand" evidence="12">
    <location>
        <begin position="219"/>
        <end position="228"/>
    </location>
</feature>
<organism>
    <name type="scientific">Neisseria meningitidis serogroup B (strain ATCC BAA-335 / MC58)</name>
    <dbReference type="NCBI Taxonomy" id="122586"/>
    <lineage>
        <taxon>Bacteria</taxon>
        <taxon>Pseudomonadati</taxon>
        <taxon>Pseudomonadota</taxon>
        <taxon>Betaproteobacteria</taxon>
        <taxon>Neisseriales</taxon>
        <taxon>Neisseriaceae</taxon>
        <taxon>Neisseria</taxon>
    </lineage>
</organism>
<reference key="1">
    <citation type="journal article" date="1989" name="Infect. Immun.">
        <title>Sequence of the structural gene (rmpM) for the class 4 outer membrane protein of Neisseria meningitidis, homology of the protein to gonococcal protein III and Escherichia coli OmpA, and construction of meningococcal strains that lack class 4 protein.</title>
        <authorList>
            <person name="Klugman K.P."/>
            <person name="Gotschlich E.C."/>
            <person name="Blake M.S."/>
        </authorList>
    </citation>
    <scope>NUCLEOTIDE SEQUENCE [GENOMIC DNA]</scope>
    <scope>DISRUPTION PHENOTYPE</scope>
    <source>
        <strain>8765 / Serogroup B / Serotype 15</strain>
        <strain>CCUG 18241 / M986 / Serogroup B / Serotype 2</strain>
        <strain>CCUG 37602 / M1080 / Serogroup B / Serotype 1</strain>
    </source>
</reference>
<reference key="2">
    <citation type="journal article" date="2000" name="Science">
        <title>Complete genome sequence of Neisseria meningitidis serogroup B strain MC58.</title>
        <authorList>
            <person name="Tettelin H."/>
            <person name="Saunders N.J."/>
            <person name="Heidelberg J.F."/>
            <person name="Jeffries A.C."/>
            <person name="Nelson K.E."/>
            <person name="Eisen J.A."/>
            <person name="Ketchum K.A."/>
            <person name="Hood D.W."/>
            <person name="Peden J.F."/>
            <person name="Dodson R.J."/>
            <person name="Nelson W.C."/>
            <person name="Gwinn M.L."/>
            <person name="DeBoy R.T."/>
            <person name="Peterson J.D."/>
            <person name="Hickey E.K."/>
            <person name="Haft D.H."/>
            <person name="Salzberg S.L."/>
            <person name="White O."/>
            <person name="Fleischmann R.D."/>
            <person name="Dougherty B.A."/>
            <person name="Mason T.M."/>
            <person name="Ciecko A."/>
            <person name="Parksey D.S."/>
            <person name="Blair E."/>
            <person name="Cittone H."/>
            <person name="Clark E.B."/>
            <person name="Cotton M.D."/>
            <person name="Utterback T.R."/>
            <person name="Khouri H.M."/>
            <person name="Qin H."/>
            <person name="Vamathevan J.J."/>
            <person name="Gill J."/>
            <person name="Scarlato V."/>
            <person name="Masignani V."/>
            <person name="Pizza M."/>
            <person name="Grandi G."/>
            <person name="Sun L."/>
            <person name="Smith H.O."/>
            <person name="Fraser C.M."/>
            <person name="Moxon E.R."/>
            <person name="Rappuoli R."/>
            <person name="Venter J.C."/>
        </authorList>
    </citation>
    <scope>NUCLEOTIDE SEQUENCE [LARGE SCALE GENOMIC DNA]</scope>
    <source>
        <strain>ATCC BAA-335 / MC58</strain>
    </source>
</reference>
<reference key="3">
    <citation type="journal article" date="2005" name="Hum. Vaccin.">
        <title>Characterization of the protein content of a meningococcal outer membrane vesicle vaccine by polyacrylamide gel electrophoresis and mass spectrometry.</title>
        <authorList>
            <person name="Vipond C."/>
            <person name="Wheeler J.X."/>
            <person name="Jones C."/>
            <person name="Feavers I.M."/>
            <person name="Suker J."/>
        </authorList>
    </citation>
    <scope>IDENTIFICATION BY MASS SPECTROMETRY [LARGE SCALE ANALYSIS]</scope>
    <scope>BIOTECHNOLOGY</scope>
</reference>
<reference key="4">
    <citation type="journal article" date="2006" name="Proteomics">
        <title>Proteomic analysis of a meningococcal outer membrane vesicle vaccine prepared from the group B strain NZ98/254.</title>
        <authorList>
            <person name="Vipond C."/>
            <person name="Suker J."/>
            <person name="Jones C."/>
            <person name="Tang C."/>
            <person name="Feavers I.M."/>
            <person name="Wheeler J.X."/>
        </authorList>
    </citation>
    <scope>IDENTIFICATION BY MASS SPECTROMETRY [LARGE SCALE ANALYSIS]</scope>
    <scope>SUBCELLULAR LOCATION</scope>
    <scope>BIOTECHNOLOGY</scope>
    <source>
        <strain>NZ98/254 / Serogroup B</strain>
    </source>
</reference>
<reference evidence="11" key="5">
    <citation type="journal article" date="2004" name="Mol. Microbiol.">
        <title>Structure of the OmpA-like domain of RmpM from Neisseria meningitidis.</title>
        <authorList>
            <person name="Grizot S."/>
            <person name="Buchanan S.K."/>
        </authorList>
    </citation>
    <scope>X-RAY CRYSTALLOGRAPHY (1.90 ANGSTROMS) OF 87-242</scope>
    <scope>SUBUNIT</scope>
    <scope>DOMAIN</scope>
    <scope>DISULFIDE BOND</scope>
    <scope>PROBABLE PETIDOGYLCAN-BINDING</scope>
    <source>
        <strain>ATCC 53415 / Serogroup B</strain>
    </source>
</reference>
<protein>
    <recommendedName>
        <fullName evidence="8">Outer membrane protein class 4</fullName>
    </recommendedName>
    <alternativeName>
        <fullName evidence="8">Reduction-modifiable protein M</fullName>
        <shortName evidence="8">RmpM</shortName>
    </alternativeName>
</protein>
<sequence>MTKQLKLSALFVALLASGTAVAGEASVQGYTVSGQSNEIVRNNYGECWKNAYFDKASQGRVECGDAVAAPEPEPEPEPAPAPVVVVEQAPQYVDETISLSAKTLFGFDKDSLRAEAQDNLKVLAQRLSRTNVQSVRVEGHTDFMGSDKYNQALSERRAYVVANNLVSNGVPVSRISAVGLGESQAQMTQVCEAEVAKLGAKVSKAKKREALIACIEPDRRVDVKIRSIVTRQVVPAHNHHQH</sequence>